<organism>
    <name type="scientific">Homo sapiens</name>
    <name type="common">Human</name>
    <dbReference type="NCBI Taxonomy" id="9606"/>
    <lineage>
        <taxon>Eukaryota</taxon>
        <taxon>Metazoa</taxon>
        <taxon>Chordata</taxon>
        <taxon>Craniata</taxon>
        <taxon>Vertebrata</taxon>
        <taxon>Euteleostomi</taxon>
        <taxon>Mammalia</taxon>
        <taxon>Eutheria</taxon>
        <taxon>Euarchontoglires</taxon>
        <taxon>Primates</taxon>
        <taxon>Haplorrhini</taxon>
        <taxon>Catarrhini</taxon>
        <taxon>Hominidae</taxon>
        <taxon>Homo</taxon>
    </lineage>
</organism>
<sequence>MAAKGAHGSYLKVESELERCRAEGHWDRMPELVRQLQTLSMPGGGGNRRGSPSAAFTFPDTDDFGKLLLAEALLEQCLKENHAKIKDSMPLLEKNEPKMSEAKNYLSSILNHGRLSPQYMCEAMLILGKLHYVEGSYRDAISMYARAGIDDMSMENKPLYQMRLLSEAFVIKGLSLERLPNSIASRFRLTEREEEVITCFERASWIAQVFLQELEKTTNNSTSRHLKGCHPLDYELTYFLEAALQSAYVKNLKKGNIVKGMRELREVLRTVETKATQNFKVMAAKHLAGVLLHSLSEECYWSPLSHPLPEFMGKEESSFATQALRKPHLYEGDNLYCPKDNIEEALLLLLISESMATRDVVLSRVPEQEEDRTVSLQNAAAIYDLLSITLGRRGQYVMLSECLERAMKFAFGEFHLWYQVALSMVACGKSAYAVSLLRECVKLRPSDPTVPLMAAKVCIGSLRWLEEAEHFAMMVISLGEEAGEFLPKGYLALGLTYSLQATDATLKSKQDELHRKALQTLERAQQLAPSDPQVILYVSLQLALVRQISSAMEQLQEALKVRKDDAHALHLLALLFSAQKHHQHALDVVNMAITEHPENFNLMFTKVKLEQVLKGPEEALVTCRQVLRLWQTLYSFSQLGGLEKDGSFGEGLTMKKQSGMHLTLPDAHDADSGSRRASSIAASRLEEAMSELTMPSSVLKQGPMQLWTTLEQIWLQAAELFMEQQHLKEAGFCIQEAAGLFPTSHSVLYMRGRLAEVKGNLEEAKQLYKEALTVNPDGVRIMHSLGLMLSRLGHKSLAQKVLRDAVERQSTCHEAWQGLGEVLQAQGQNEAAVDCFLTALELEASSPVLPFSIIPREL</sequence>
<dbReference type="EMBL" id="AL834383">
    <property type="protein sequence ID" value="CAD39046.2"/>
    <property type="molecule type" value="mRNA"/>
</dbReference>
<dbReference type="EMBL" id="AB032966">
    <property type="protein sequence ID" value="BAA86454.2"/>
    <property type="status" value="ALT_SEQ"/>
    <property type="molecule type" value="mRNA"/>
</dbReference>
<dbReference type="EMBL" id="AC016722">
    <property type="status" value="NOT_ANNOTATED_CDS"/>
    <property type="molecule type" value="Genomic_DNA"/>
</dbReference>
<dbReference type="EMBL" id="AC073283">
    <property type="status" value="NOT_ANNOTATED_CDS"/>
    <property type="molecule type" value="Genomic_DNA"/>
</dbReference>
<dbReference type="EMBL" id="AC093732">
    <property type="status" value="NOT_ANNOTATED_CDS"/>
    <property type="molecule type" value="Genomic_DNA"/>
</dbReference>
<dbReference type="EMBL" id="BC001978">
    <property type="protein sequence ID" value="AAH01978.1"/>
    <property type="molecule type" value="mRNA"/>
</dbReference>
<dbReference type="EMBL" id="BC027457">
    <property type="protein sequence ID" value="AAH27457.1"/>
    <property type="molecule type" value="mRNA"/>
</dbReference>
<dbReference type="EMBL" id="BC111487">
    <property type="protein sequence ID" value="AAI11488.1"/>
    <property type="molecule type" value="mRNA"/>
</dbReference>
<dbReference type="CCDS" id="CCDS33193.1">
    <molecule id="Q9ULT0-1"/>
</dbReference>
<dbReference type="CCDS" id="CCDS74511.1">
    <molecule id="Q9ULT0-4"/>
</dbReference>
<dbReference type="RefSeq" id="NP_001275880.1">
    <molecule id="Q9ULT0-4"/>
    <property type="nucleotide sequence ID" value="NM_001288951.2"/>
</dbReference>
<dbReference type="RefSeq" id="NP_001275882.1">
    <property type="nucleotide sequence ID" value="NM_001288953.1"/>
</dbReference>
<dbReference type="RefSeq" id="NP_001275884.1">
    <property type="nucleotide sequence ID" value="NM_001288955.1"/>
</dbReference>
<dbReference type="RefSeq" id="NP_065191.2">
    <molecule id="Q9ULT0-1"/>
    <property type="nucleotide sequence ID" value="NM_020458.4"/>
</dbReference>
<dbReference type="SMR" id="Q9ULT0"/>
<dbReference type="BioGRID" id="121455">
    <property type="interactions" value="28"/>
</dbReference>
<dbReference type="FunCoup" id="Q9ULT0">
    <property type="interactions" value="806"/>
</dbReference>
<dbReference type="IntAct" id="Q9ULT0">
    <property type="interactions" value="26"/>
</dbReference>
<dbReference type="MINT" id="Q9ULT0"/>
<dbReference type="STRING" id="9606.ENSP00000378320"/>
<dbReference type="GlyGen" id="Q9ULT0">
    <property type="glycosylation" value="1 site"/>
</dbReference>
<dbReference type="iPTMnet" id="Q9ULT0"/>
<dbReference type="PhosphoSitePlus" id="Q9ULT0"/>
<dbReference type="BioMuta" id="TTC7A"/>
<dbReference type="DMDM" id="34223742"/>
<dbReference type="jPOST" id="Q9ULT0"/>
<dbReference type="MassIVE" id="Q9ULT0"/>
<dbReference type="PaxDb" id="9606-ENSP00000378320"/>
<dbReference type="PeptideAtlas" id="Q9ULT0"/>
<dbReference type="ProteomicsDB" id="61446"/>
<dbReference type="ProteomicsDB" id="85104">
    <molecule id="Q9ULT0-1"/>
</dbReference>
<dbReference type="ProteomicsDB" id="85105">
    <molecule id="Q9ULT0-3"/>
</dbReference>
<dbReference type="Pumba" id="Q9ULT0"/>
<dbReference type="Antibodypedia" id="47406">
    <property type="antibodies" value="115 antibodies from 21 providers"/>
</dbReference>
<dbReference type="DNASU" id="57217"/>
<dbReference type="Ensembl" id="ENST00000319190.11">
    <molecule id="Q9ULT0-1"/>
    <property type="protein sequence ID" value="ENSP00000316699.5"/>
    <property type="gene ID" value="ENSG00000068724.18"/>
</dbReference>
<dbReference type="Ensembl" id="ENST00000394850.6">
    <molecule id="Q9ULT0-4"/>
    <property type="protein sequence ID" value="ENSP00000378320.2"/>
    <property type="gene ID" value="ENSG00000068724.18"/>
</dbReference>
<dbReference type="GeneID" id="57217"/>
<dbReference type="KEGG" id="hsa:57217"/>
<dbReference type="MANE-Select" id="ENST00000319190.11">
    <property type="protein sequence ID" value="ENSP00000316699.5"/>
    <property type="RefSeq nucleotide sequence ID" value="NM_020458.4"/>
    <property type="RefSeq protein sequence ID" value="NP_065191.2"/>
</dbReference>
<dbReference type="UCSC" id="uc002rvo.4">
    <molecule id="Q9ULT0-1"/>
    <property type="organism name" value="human"/>
</dbReference>
<dbReference type="AGR" id="HGNC:19750"/>
<dbReference type="CTD" id="57217"/>
<dbReference type="DisGeNET" id="57217"/>
<dbReference type="GeneCards" id="TTC7A"/>
<dbReference type="HGNC" id="HGNC:19750">
    <property type="gene designation" value="TTC7A"/>
</dbReference>
<dbReference type="HPA" id="ENSG00000068724">
    <property type="expression patterns" value="Tissue enhanced (testis)"/>
</dbReference>
<dbReference type="MalaCards" id="TTC7A"/>
<dbReference type="MIM" id="243150">
    <property type="type" value="phenotype"/>
</dbReference>
<dbReference type="MIM" id="609332">
    <property type="type" value="gene"/>
</dbReference>
<dbReference type="neXtProt" id="NX_Q9ULT0"/>
<dbReference type="OpenTargets" id="ENSG00000068724"/>
<dbReference type="Orphanet" id="436252">
    <property type="disease" value="Combined immunodeficiency-multiple intestinal atresia"/>
</dbReference>
<dbReference type="PharmGKB" id="PA134993362"/>
<dbReference type="VEuPathDB" id="HostDB:ENSG00000068724"/>
<dbReference type="eggNOG" id="KOG4162">
    <property type="taxonomic scope" value="Eukaryota"/>
</dbReference>
<dbReference type="GeneTree" id="ENSGT00940000158638"/>
<dbReference type="HOGENOM" id="CLU_010512_1_0_1"/>
<dbReference type="InParanoid" id="Q9ULT0"/>
<dbReference type="OMA" id="CRSECNW"/>
<dbReference type="OrthoDB" id="29013at2759"/>
<dbReference type="PAN-GO" id="Q9ULT0">
    <property type="GO annotations" value="3 GO annotations based on evolutionary models"/>
</dbReference>
<dbReference type="PhylomeDB" id="Q9ULT0"/>
<dbReference type="TreeFam" id="TF313783"/>
<dbReference type="PathwayCommons" id="Q9ULT0"/>
<dbReference type="SignaLink" id="Q9ULT0"/>
<dbReference type="BioGRID-ORCS" id="57217">
    <property type="hits" value="85 hits in 1158 CRISPR screens"/>
</dbReference>
<dbReference type="ChiTaRS" id="TTC7A">
    <property type="organism name" value="human"/>
</dbReference>
<dbReference type="GenomeRNAi" id="57217"/>
<dbReference type="Pharos" id="Q9ULT0">
    <property type="development level" value="Tbio"/>
</dbReference>
<dbReference type="PRO" id="PR:Q9ULT0"/>
<dbReference type="Proteomes" id="UP000005640">
    <property type="component" value="Chromosome 2"/>
</dbReference>
<dbReference type="RNAct" id="Q9ULT0">
    <property type="molecule type" value="protein"/>
</dbReference>
<dbReference type="Bgee" id="ENSG00000068724">
    <property type="expression patterns" value="Expressed in sperm and 167 other cell types or tissues"/>
</dbReference>
<dbReference type="ExpressionAtlas" id="Q9ULT0">
    <property type="expression patterns" value="baseline and differential"/>
</dbReference>
<dbReference type="GO" id="GO:0005737">
    <property type="term" value="C:cytoplasm"/>
    <property type="evidence" value="ECO:0007669"/>
    <property type="project" value="UniProtKB-SubCell"/>
</dbReference>
<dbReference type="GO" id="GO:0005886">
    <property type="term" value="C:plasma membrane"/>
    <property type="evidence" value="ECO:0000318"/>
    <property type="project" value="GO_Central"/>
</dbReference>
<dbReference type="GO" id="GO:0030097">
    <property type="term" value="P:hemopoiesis"/>
    <property type="evidence" value="ECO:0007669"/>
    <property type="project" value="Ensembl"/>
</dbReference>
<dbReference type="GO" id="GO:0006879">
    <property type="term" value="P:intracellular iron ion homeostasis"/>
    <property type="evidence" value="ECO:0007669"/>
    <property type="project" value="Ensembl"/>
</dbReference>
<dbReference type="GO" id="GO:0046854">
    <property type="term" value="P:phosphatidylinositol phosphate biosynthetic process"/>
    <property type="evidence" value="ECO:0000318"/>
    <property type="project" value="GO_Central"/>
</dbReference>
<dbReference type="GO" id="GO:0072659">
    <property type="term" value="P:protein localization to plasma membrane"/>
    <property type="evidence" value="ECO:0000314"/>
    <property type="project" value="UniProtKB"/>
</dbReference>
<dbReference type="FunFam" id="1.25.40.10:FF:000066">
    <property type="entry name" value="Tetratricopeptide repeat domain 7A"/>
    <property type="match status" value="1"/>
</dbReference>
<dbReference type="FunFam" id="1.25.40.10:FF:000105">
    <property type="entry name" value="Tetratricopeptide repeat domain 7A"/>
    <property type="match status" value="1"/>
</dbReference>
<dbReference type="Gene3D" id="1.25.40.10">
    <property type="entry name" value="Tetratricopeptide repeat domain"/>
    <property type="match status" value="2"/>
</dbReference>
<dbReference type="InterPro" id="IPR051722">
    <property type="entry name" value="Endocytosis_PI4K-reg_protein"/>
</dbReference>
<dbReference type="InterPro" id="IPR011990">
    <property type="entry name" value="TPR-like_helical_dom_sf"/>
</dbReference>
<dbReference type="InterPro" id="IPR019734">
    <property type="entry name" value="TPR_rpt"/>
</dbReference>
<dbReference type="InterPro" id="IPR045819">
    <property type="entry name" value="TTC7_N"/>
</dbReference>
<dbReference type="PANTHER" id="PTHR23083:SF475">
    <property type="entry name" value="TETRATRICOPEPTIDE REPEAT PROTEIN 7A"/>
    <property type="match status" value="1"/>
</dbReference>
<dbReference type="PANTHER" id="PTHR23083">
    <property type="entry name" value="TETRATRICOPEPTIDE REPEAT PROTEIN, TPR"/>
    <property type="match status" value="1"/>
</dbReference>
<dbReference type="Pfam" id="PF13181">
    <property type="entry name" value="TPR_8"/>
    <property type="match status" value="2"/>
</dbReference>
<dbReference type="Pfam" id="PF19440">
    <property type="entry name" value="TTC7_N"/>
    <property type="match status" value="1"/>
</dbReference>
<dbReference type="SMART" id="SM00028">
    <property type="entry name" value="TPR"/>
    <property type="match status" value="7"/>
</dbReference>
<dbReference type="SUPFAM" id="SSF48452">
    <property type="entry name" value="TPR-like"/>
    <property type="match status" value="2"/>
</dbReference>
<dbReference type="PROSITE" id="PS50005">
    <property type="entry name" value="TPR"/>
    <property type="match status" value="8"/>
</dbReference>
<dbReference type="PROSITE" id="PS50293">
    <property type="entry name" value="TPR_REGION"/>
    <property type="match status" value="3"/>
</dbReference>
<evidence type="ECO:0000250" key="1">
    <source>
        <dbReference type="UniProtKB" id="Q86TV6"/>
    </source>
</evidence>
<evidence type="ECO:0000250" key="2">
    <source>
        <dbReference type="UniProtKB" id="Q8BGB2"/>
    </source>
</evidence>
<evidence type="ECO:0000255" key="3"/>
<evidence type="ECO:0000269" key="4">
    <source>
    </source>
</evidence>
<evidence type="ECO:0000269" key="5">
    <source>
    </source>
</evidence>
<evidence type="ECO:0000269" key="6">
    <source>
    </source>
</evidence>
<evidence type="ECO:0000269" key="7">
    <source>
    </source>
</evidence>
<evidence type="ECO:0000269" key="8">
    <source>
    </source>
</evidence>
<evidence type="ECO:0000269" key="9">
    <source>
    </source>
</evidence>
<evidence type="ECO:0000269" key="10">
    <source>
    </source>
</evidence>
<evidence type="ECO:0000269" key="11">
    <source>
    </source>
</evidence>
<evidence type="ECO:0000269" key="12">
    <source>
    </source>
</evidence>
<evidence type="ECO:0000269" key="13">
    <source>
    </source>
</evidence>
<evidence type="ECO:0000269" key="14">
    <source>
    </source>
</evidence>
<evidence type="ECO:0000303" key="15">
    <source>
    </source>
</evidence>
<evidence type="ECO:0000303" key="16">
    <source>
    </source>
</evidence>
<evidence type="ECO:0000305" key="17"/>
<evidence type="ECO:0000312" key="18">
    <source>
        <dbReference type="HGNC" id="HGNC:19750"/>
    </source>
</evidence>
<evidence type="ECO:0007744" key="19">
    <source>
    </source>
</evidence>
<evidence type="ECO:0007744" key="20">
    <source>
    </source>
</evidence>
<evidence type="ECO:0007744" key="21">
    <source>
    </source>
</evidence>
<evidence type="ECO:0007744" key="22">
    <source>
    </source>
</evidence>
<evidence type="ECO:0007744" key="23">
    <source>
    </source>
</evidence>
<reference key="1">
    <citation type="journal article" date="2007" name="BMC Genomics">
        <title>The full-ORF clone resource of the German cDNA consortium.</title>
        <authorList>
            <person name="Bechtel S."/>
            <person name="Rosenfelder H."/>
            <person name="Duda A."/>
            <person name="Schmidt C.P."/>
            <person name="Ernst U."/>
            <person name="Wellenreuther R."/>
            <person name="Mehrle A."/>
            <person name="Schuster C."/>
            <person name="Bahr A."/>
            <person name="Bloecker H."/>
            <person name="Heubner D."/>
            <person name="Hoerlein A."/>
            <person name="Michel G."/>
            <person name="Wedler H."/>
            <person name="Koehrer K."/>
            <person name="Ottenwaelder B."/>
            <person name="Poustka A."/>
            <person name="Wiemann S."/>
            <person name="Schupp I."/>
        </authorList>
    </citation>
    <scope>NUCLEOTIDE SEQUENCE [LARGE SCALE MRNA] (ISOFORM 1)</scope>
    <scope>VARIANT LEU-538</scope>
    <source>
        <tissue>Testis</tissue>
    </source>
</reference>
<reference key="2">
    <citation type="journal article" date="1999" name="DNA Res.">
        <title>Characterization of cDNA clones selected by the GeneMark analysis from size-fractionated cDNA libraries from human brain.</title>
        <authorList>
            <person name="Hirosawa M."/>
            <person name="Nagase T."/>
            <person name="Ishikawa K."/>
            <person name="Kikuno R."/>
            <person name="Nomura N."/>
            <person name="Ohara O."/>
        </authorList>
    </citation>
    <scope>NUCLEOTIDE SEQUENCE [LARGE SCALE MRNA] OF 82-858 (ISOFORM 2)</scope>
    <source>
        <tissue>Brain</tissue>
    </source>
</reference>
<reference key="3">
    <citation type="journal article" date="2002" name="DNA Res.">
        <title>Construction of expression-ready cDNA clones for KIAA genes: manual curation of 330 KIAA cDNA clones.</title>
        <authorList>
            <person name="Nakajima D."/>
            <person name="Okazaki N."/>
            <person name="Yamakawa H."/>
            <person name="Kikuno R."/>
            <person name="Ohara O."/>
            <person name="Nagase T."/>
        </authorList>
    </citation>
    <scope>SEQUENCE REVISION</scope>
</reference>
<reference key="4">
    <citation type="journal article" date="2005" name="Nature">
        <title>Generation and annotation of the DNA sequences of human chromosomes 2 and 4.</title>
        <authorList>
            <person name="Hillier L.W."/>
            <person name="Graves T.A."/>
            <person name="Fulton R.S."/>
            <person name="Fulton L.A."/>
            <person name="Pepin K.H."/>
            <person name="Minx P."/>
            <person name="Wagner-McPherson C."/>
            <person name="Layman D."/>
            <person name="Wylie K."/>
            <person name="Sekhon M."/>
            <person name="Becker M.C."/>
            <person name="Fewell G.A."/>
            <person name="Delehaunty K.D."/>
            <person name="Miner T.L."/>
            <person name="Nash W.E."/>
            <person name="Kremitzki C."/>
            <person name="Oddy L."/>
            <person name="Du H."/>
            <person name="Sun H."/>
            <person name="Bradshaw-Cordum H."/>
            <person name="Ali J."/>
            <person name="Carter J."/>
            <person name="Cordes M."/>
            <person name="Harris A."/>
            <person name="Isak A."/>
            <person name="van Brunt A."/>
            <person name="Nguyen C."/>
            <person name="Du F."/>
            <person name="Courtney L."/>
            <person name="Kalicki J."/>
            <person name="Ozersky P."/>
            <person name="Abbott S."/>
            <person name="Armstrong J."/>
            <person name="Belter E.A."/>
            <person name="Caruso L."/>
            <person name="Cedroni M."/>
            <person name="Cotton M."/>
            <person name="Davidson T."/>
            <person name="Desai A."/>
            <person name="Elliott G."/>
            <person name="Erb T."/>
            <person name="Fronick C."/>
            <person name="Gaige T."/>
            <person name="Haakenson W."/>
            <person name="Haglund K."/>
            <person name="Holmes A."/>
            <person name="Harkins R."/>
            <person name="Kim K."/>
            <person name="Kruchowski S.S."/>
            <person name="Strong C.M."/>
            <person name="Grewal N."/>
            <person name="Goyea E."/>
            <person name="Hou S."/>
            <person name="Levy A."/>
            <person name="Martinka S."/>
            <person name="Mead K."/>
            <person name="McLellan M.D."/>
            <person name="Meyer R."/>
            <person name="Randall-Maher J."/>
            <person name="Tomlinson C."/>
            <person name="Dauphin-Kohlberg S."/>
            <person name="Kozlowicz-Reilly A."/>
            <person name="Shah N."/>
            <person name="Swearengen-Shahid S."/>
            <person name="Snider J."/>
            <person name="Strong J.T."/>
            <person name="Thompson J."/>
            <person name="Yoakum M."/>
            <person name="Leonard S."/>
            <person name="Pearman C."/>
            <person name="Trani L."/>
            <person name="Radionenko M."/>
            <person name="Waligorski J.E."/>
            <person name="Wang C."/>
            <person name="Rock S.M."/>
            <person name="Tin-Wollam A.-M."/>
            <person name="Maupin R."/>
            <person name="Latreille P."/>
            <person name="Wendl M.C."/>
            <person name="Yang S.-P."/>
            <person name="Pohl C."/>
            <person name="Wallis J.W."/>
            <person name="Spieth J."/>
            <person name="Bieri T.A."/>
            <person name="Berkowicz N."/>
            <person name="Nelson J.O."/>
            <person name="Osborne J."/>
            <person name="Ding L."/>
            <person name="Meyer R."/>
            <person name="Sabo A."/>
            <person name="Shotland Y."/>
            <person name="Sinha P."/>
            <person name="Wohldmann P.E."/>
            <person name="Cook L.L."/>
            <person name="Hickenbotham M.T."/>
            <person name="Eldred J."/>
            <person name="Williams D."/>
            <person name="Jones T.A."/>
            <person name="She X."/>
            <person name="Ciccarelli F.D."/>
            <person name="Izaurralde E."/>
            <person name="Taylor J."/>
            <person name="Schmutz J."/>
            <person name="Myers R.M."/>
            <person name="Cox D.R."/>
            <person name="Huang X."/>
            <person name="McPherson J.D."/>
            <person name="Mardis E.R."/>
            <person name="Clifton S.W."/>
            <person name="Warren W.C."/>
            <person name="Chinwalla A.T."/>
            <person name="Eddy S.R."/>
            <person name="Marra M.A."/>
            <person name="Ovcharenko I."/>
            <person name="Furey T.S."/>
            <person name="Miller W."/>
            <person name="Eichler E.E."/>
            <person name="Bork P."/>
            <person name="Suyama M."/>
            <person name="Torrents D."/>
            <person name="Waterston R.H."/>
            <person name="Wilson R.K."/>
        </authorList>
    </citation>
    <scope>NUCLEOTIDE SEQUENCE [LARGE SCALE GENOMIC DNA]</scope>
</reference>
<reference key="5">
    <citation type="journal article" date="2004" name="Genome Res.">
        <title>The status, quality, and expansion of the NIH full-length cDNA project: the Mammalian Gene Collection (MGC).</title>
        <authorList>
            <consortium name="The MGC Project Team"/>
        </authorList>
    </citation>
    <scope>NUCLEOTIDE SEQUENCE [LARGE SCALE MRNA] (ISOFORM 3)</scope>
    <scope>NUCLEOTIDE SEQUENCE [LARGE SCALE MRNA] OF 409-858 (ISOFORM 1)</scope>
    <source>
        <tissue>Cervix</tissue>
        <tissue>Testis</tissue>
    </source>
</reference>
<reference key="6">
    <citation type="journal article" date="2006" name="Cell">
        <title>Global, in vivo, and site-specific phosphorylation dynamics in signaling networks.</title>
        <authorList>
            <person name="Olsen J.V."/>
            <person name="Blagoev B."/>
            <person name="Gnad F."/>
            <person name="Macek B."/>
            <person name="Kumar C."/>
            <person name="Mortensen P."/>
            <person name="Mann M."/>
        </authorList>
    </citation>
    <scope>IDENTIFICATION BY MASS SPECTROMETRY [LARGE SCALE ANALYSIS]</scope>
    <source>
        <tissue>Cervix carcinoma</tissue>
    </source>
</reference>
<reference key="7">
    <citation type="journal article" date="2008" name="Mol. Cell">
        <title>Kinase-selective enrichment enables quantitative phosphoproteomics of the kinome across the cell cycle.</title>
        <authorList>
            <person name="Daub H."/>
            <person name="Olsen J.V."/>
            <person name="Bairlein M."/>
            <person name="Gnad F."/>
            <person name="Oppermann F.S."/>
            <person name="Korner R."/>
            <person name="Greff Z."/>
            <person name="Keri G."/>
            <person name="Stemmann O."/>
            <person name="Mann M."/>
        </authorList>
    </citation>
    <scope>IDENTIFICATION BY MASS SPECTROMETRY [LARGE SCALE ANALYSIS]</scope>
    <source>
        <tissue>Cervix carcinoma</tissue>
    </source>
</reference>
<reference key="8">
    <citation type="journal article" date="2008" name="Proc. Natl. Acad. Sci. U.S.A.">
        <title>A quantitative atlas of mitotic phosphorylation.</title>
        <authorList>
            <person name="Dephoure N."/>
            <person name="Zhou C."/>
            <person name="Villen J."/>
            <person name="Beausoleil S.A."/>
            <person name="Bakalarski C.E."/>
            <person name="Elledge S.J."/>
            <person name="Gygi S.P."/>
        </authorList>
    </citation>
    <scope>PHOSPHORYLATION [LARGE SCALE ANALYSIS] AT SER-51 AND SER-182</scope>
    <scope>IDENTIFICATION BY MASS SPECTROMETRY [LARGE SCALE ANALYSIS]</scope>
    <source>
        <tissue>Cervix carcinoma</tissue>
    </source>
</reference>
<reference key="9">
    <citation type="journal article" date="2009" name="Sci. Signal.">
        <title>Quantitative phosphoproteomic analysis of T cell receptor signaling reveals system-wide modulation of protein-protein interactions.</title>
        <authorList>
            <person name="Mayya V."/>
            <person name="Lundgren D.H."/>
            <person name="Hwang S.-I."/>
            <person name="Rezaul K."/>
            <person name="Wu L."/>
            <person name="Eng J.K."/>
            <person name="Rodionov V."/>
            <person name="Han D.K."/>
        </authorList>
    </citation>
    <scope>PHOSPHORYLATION [LARGE SCALE ANALYSIS] AT SER-51</scope>
    <scope>IDENTIFICATION BY MASS SPECTROMETRY [LARGE SCALE ANALYSIS]</scope>
    <source>
        <tissue>Leukemic T-cell</tissue>
    </source>
</reference>
<reference key="10">
    <citation type="journal article" date="2010" name="Sci. Signal.">
        <title>Quantitative phosphoproteomics reveals widespread full phosphorylation site occupancy during mitosis.</title>
        <authorList>
            <person name="Olsen J.V."/>
            <person name="Vermeulen M."/>
            <person name="Santamaria A."/>
            <person name="Kumar C."/>
            <person name="Miller M.L."/>
            <person name="Jensen L.J."/>
            <person name="Gnad F."/>
            <person name="Cox J."/>
            <person name="Jensen T.S."/>
            <person name="Nigg E.A."/>
            <person name="Brunak S."/>
            <person name="Mann M."/>
        </authorList>
    </citation>
    <scope>PHOSPHORYLATION [LARGE SCALE ANALYSIS] AT SER-51 AND SER-647</scope>
    <scope>IDENTIFICATION BY MASS SPECTROMETRY [LARGE SCALE ANALYSIS]</scope>
    <source>
        <tissue>Cervix carcinoma</tissue>
    </source>
</reference>
<reference key="11">
    <citation type="journal article" date="2012" name="J. Cell Biol.">
        <title>PtdIns4P synthesis by PI4KIIIalpha at the plasma membrane and its impact on plasma membrane identity.</title>
        <authorList>
            <person name="Nakatsu F."/>
            <person name="Baskin J.M."/>
            <person name="Chung J."/>
            <person name="Tanner L.B."/>
            <person name="Shui G."/>
            <person name="Lee S.Y."/>
            <person name="Pirruccello M."/>
            <person name="Hao M."/>
            <person name="Ingolia N.T."/>
            <person name="Wenk M.R."/>
            <person name="De Camilli P."/>
        </authorList>
    </citation>
    <scope>FUNCTION</scope>
</reference>
<reference key="12">
    <citation type="journal article" date="2013" name="J. Proteome Res.">
        <title>Toward a comprehensive characterization of a human cancer cell phosphoproteome.</title>
        <authorList>
            <person name="Zhou H."/>
            <person name="Di Palma S."/>
            <person name="Preisinger C."/>
            <person name="Peng M."/>
            <person name="Polat A.N."/>
            <person name="Heck A.J."/>
            <person name="Mohammed S."/>
        </authorList>
    </citation>
    <scope>PHOSPHORYLATION [LARGE SCALE ANALYSIS] AT SER-51; SER-182; SER-647; SER-690 AND THR-693</scope>
    <scope>IDENTIFICATION BY MASS SPECTROMETRY [LARGE SCALE ANALYSIS]</scope>
    <source>
        <tissue>Cervix carcinoma</tissue>
        <tissue>Erythroleukemia</tissue>
    </source>
</reference>
<reference key="13">
    <citation type="journal article" date="2014" name="J. Proteomics">
        <title>An enzyme assisted RP-RPLC approach for in-depth analysis of human liver phosphoproteome.</title>
        <authorList>
            <person name="Bian Y."/>
            <person name="Song C."/>
            <person name="Cheng K."/>
            <person name="Dong M."/>
            <person name="Wang F."/>
            <person name="Huang J."/>
            <person name="Sun D."/>
            <person name="Wang L."/>
            <person name="Ye M."/>
            <person name="Zou H."/>
        </authorList>
    </citation>
    <scope>PHOSPHORYLATION [LARGE SCALE ANALYSIS] AT SER-647 AND THR-693</scope>
    <scope>IDENTIFICATION BY MASS SPECTROMETRY [LARGE SCALE ANALYSIS]</scope>
    <source>
        <tissue>Liver</tissue>
    </source>
</reference>
<reference key="14">
    <citation type="journal article" date="2014" name="Medicine (Baltimore)">
        <title>Multiple intestinal atresia with combined immune deficiency related to TTC7A defect is a multiorgan pathology: study of a French-Canadian-based cohort.</title>
        <authorList>
            <person name="Fernandez I."/>
            <person name="Patey N."/>
            <person name="Marchand V."/>
            <person name="Birlea M."/>
            <person name="Maranda B."/>
            <person name="Haddad E."/>
            <person name="Decaluwe H."/>
            <person name="Le Deist F."/>
        </authorList>
    </citation>
    <scope>INVOLVEMENT IN GIDID1</scope>
    <scope>SUBCELLULAR LOCATION</scope>
    <scope>TISSUE SPECIFICITY</scope>
</reference>
<reference key="15">
    <citation type="journal article" date="2021" name="Brain">
        <title>Biallelic PI4KA variants cause neurological, intestinal and immunological disease.</title>
        <authorList>
            <person name="Salter C.G."/>
            <person name="Cai Y."/>
            <person name="Lo B."/>
            <person name="Helman G."/>
            <person name="Taylor H."/>
            <person name="McCartney A."/>
            <person name="Leslie J.S."/>
            <person name="Accogli A."/>
            <person name="Zara F."/>
            <person name="Traverso M."/>
            <person name="Fasham J."/>
            <person name="Lees J.A."/>
            <person name="Ferla M.P."/>
            <person name="Chioza B.A."/>
            <person name="Wenger O."/>
            <person name="Scott E."/>
            <person name="Cross H.E."/>
            <person name="Crawford J."/>
            <person name="Warshawsky I."/>
            <person name="Keisling M."/>
            <person name="Agamanolis D."/>
            <person name="Ward Melver C."/>
            <person name="Cox H."/>
            <person name="Elawad M."/>
            <person name="Marton T."/>
            <person name="Wakeling M.N."/>
            <person name="Holzinger D."/>
            <person name="Tippelt S."/>
            <person name="Munteanu M."/>
            <person name="Valcheva D."/>
            <person name="Deal C."/>
            <person name="Van Meerbeke S."/>
            <person name="Walsh Vockley C."/>
            <person name="Butte M.J."/>
            <person name="Acar U."/>
            <person name="van der Knaap M.S."/>
            <person name="Korenke G.C."/>
            <person name="Kotzaeridou U."/>
            <person name="Balla T."/>
            <person name="Simons C."/>
            <person name="Uhlig H.H."/>
            <person name="Crosby A.H."/>
            <person name="De Camilli P."/>
            <person name="Wolf N.I."/>
            <person name="Baple E.L."/>
        </authorList>
    </citation>
    <scope>INTERACTION WITH PI4KA</scope>
</reference>
<reference key="16">
    <citation type="journal article" date="2013" name="J. Allergy Clin. Immunol.">
        <title>Whole-exome sequencing identifies tetratricopeptide repeat domain 7A (TTC7A) mutations for combined immunodeficiency with intestinal atresias.</title>
        <authorList>
            <person name="Chen R."/>
            <person name="Giliani S."/>
            <person name="Lanzi G."/>
            <person name="Mias G.I."/>
            <person name="Lonardi S."/>
            <person name="Dobbs K."/>
            <person name="Manis J."/>
            <person name="Im H."/>
            <person name="Gallagher J.E."/>
            <person name="Phanstiel D.H."/>
            <person name="Euskirchen G."/>
            <person name="Lacroute P."/>
            <person name="Bettinger K."/>
            <person name="Moratto D."/>
            <person name="Weinacht K."/>
            <person name="Montin D."/>
            <person name="Gallo E."/>
            <person name="Mangili G."/>
            <person name="Porta F."/>
            <person name="Notarangelo L.D."/>
            <person name="Pedretti S."/>
            <person name="Al-Herz W."/>
            <person name="Alfahdli W."/>
            <person name="Comeau A.M."/>
            <person name="Traister R.S."/>
            <person name="Pai S.Y."/>
            <person name="Carella G."/>
            <person name="Facchetti F."/>
            <person name="Nadeau K.C."/>
            <person name="Snyder M."/>
            <person name="Notarangelo L.D."/>
        </authorList>
    </citation>
    <scope>VARIANTS GIDID1 PRO-399; ARG-606; PRO-672; SER-678 DEL; GLN-712 DEL AND PRO-823</scope>
</reference>
<reference key="17">
    <citation type="journal article" date="2013" name="J. Med. Genet.">
        <title>Exome sequencing identifies mutations in the gene TTC7A in French-Canadian cases with hereditary multiple intestinal atresia.</title>
        <authorList>
            <person name="Samuels M.E."/>
            <person name="Majewski J."/>
            <person name="Alirezaie N."/>
            <person name="Fernandez I."/>
            <person name="Casals F."/>
            <person name="Patey N."/>
            <person name="Decaluwe H."/>
            <person name="Gosselin I."/>
            <person name="Haddad E."/>
            <person name="Hodgkinson A."/>
            <person name="Idaghdour Y."/>
            <person name="Marchand V."/>
            <person name="Michaud J.L."/>
            <person name="Rodrigue M.A."/>
            <person name="Desjardins S."/>
            <person name="Dubois S."/>
            <person name="Le Deist F."/>
            <person name="Awadalla P."/>
            <person name="Raymond V."/>
            <person name="Maranda B."/>
        </authorList>
    </citation>
    <scope>VARIANT GIDID1 PRO-823</scope>
</reference>
<reference key="18">
    <citation type="journal article" date="2014" name="Gastroenterology">
        <title>Mutations in tetratricopeptide repeat domain 7A result in a severe form of very early onset inflammatory bowel disease.</title>
        <authorList>
            <person name="Avitzur Y."/>
            <person name="Guo C."/>
            <person name="Mastropaolo L.A."/>
            <person name="Bahrami E."/>
            <person name="Chen H."/>
            <person name="Zhao Z."/>
            <person name="Elkadri A."/>
            <person name="Dhillon S."/>
            <person name="Murchie R."/>
            <person name="Fattouh R."/>
            <person name="Huynh H."/>
            <person name="Walker J.L."/>
            <person name="Wales P.W."/>
            <person name="Cutz E."/>
            <person name="Kakuta Y."/>
            <person name="Dudley J."/>
            <person name="Kammermeier J."/>
            <person name="Powrie F."/>
            <person name="Shah N."/>
            <person name="Walz C."/>
            <person name="Nathrath M."/>
            <person name="Kotlarz D."/>
            <person name="Puchaka J."/>
            <person name="Krieger J.R."/>
            <person name="Racek T."/>
            <person name="Kirchner T."/>
            <person name="Walters T.D."/>
            <person name="Brumell J.H."/>
            <person name="Griffiths A.M."/>
            <person name="Rezaei N."/>
            <person name="Rashtian P."/>
            <person name="Najafi M."/>
            <person name="Monajemzadeh M."/>
            <person name="Pelsue S."/>
            <person name="McGovern D.P."/>
            <person name="Uhlig H.H."/>
            <person name="Schadt E."/>
            <person name="Klein C."/>
            <person name="Snapper S.B."/>
            <person name="Muise A.M."/>
        </authorList>
    </citation>
    <scope>VARIANTS GIDID1 LYS-71; GLN-526 DEL AND THR-832</scope>
    <scope>CHARACTERIZATION OF VARIANTS GIDID1 LYS-71 AND THR-832</scope>
    <scope>FUNCTION</scope>
    <scope>INTERACTION WITH PI4KA</scope>
</reference>
<reference key="19">
    <citation type="journal article" date="2014" name="J. Clin. Immunol.">
        <title>Tetratricopeptide repeat domain 7A (TTC7A) mutation in a newborn with multiple intestinal atresia and combined immunodeficiency.</title>
        <authorList>
            <person name="Agarwal N.S."/>
            <person name="Northrop L."/>
            <person name="Anyane-Yeboa K."/>
            <person name="Aggarwal V.S."/>
            <person name="Nagy P.L."/>
            <person name="Demirdag Y.Y."/>
        </authorList>
    </citation>
    <scope>VARIANTS GIDID1 ASP-551 AND GLN-828 DEL</scope>
</reference>
<reference key="20">
    <citation type="journal article" date="2014" name="J. Clin. Invest.">
        <title>TTC7A mutations disrupt intestinal epithelial apicobasal polarity.</title>
        <authorList>
            <person name="Bigorgne A.E."/>
            <person name="Farin H.F."/>
            <person name="Lemoine R."/>
            <person name="Mahlaoui N."/>
            <person name="Lambert N."/>
            <person name="Gil M."/>
            <person name="Schulz A."/>
            <person name="Philippet P."/>
            <person name="Schlesser P."/>
            <person name="Abrahamsen T.G."/>
            <person name="Oymar K."/>
            <person name="Davies E.G."/>
            <person name="Ellingsen C.L."/>
            <person name="Leteurtre E."/>
            <person name="Moreau-Massart B."/>
            <person name="Berrebi D."/>
            <person name="Bole-Feysot C."/>
            <person name="Nischke P."/>
            <person name="Brousse N."/>
            <person name="Fischer A."/>
            <person name="Clevers H."/>
            <person name="de Saint Basile G."/>
        </authorList>
    </citation>
    <scope>VARIANTS GIDID1 GLN-277 DEL; TYR-336 DEL; LEU-539 AND ALA-832 DEL</scope>
</reference>
<reference key="21">
    <citation type="journal article" date="2015" name="Blood">
        <title>Hypomorphic mutation in TTC7A causes combined immunodeficiency with mild structural intestinal defects.</title>
        <authorList>
            <person name="Woutsas S."/>
            <person name="Aytekin C."/>
            <person name="Salzer E."/>
            <person name="Conde C.D."/>
            <person name="Apaydin S."/>
            <person name="Pichler H."/>
            <person name="Memaran-Dadgar N."/>
            <person name="Hosnut F.O."/>
            <person name="Foerster-Waldl E."/>
            <person name="Matthes S."/>
            <person name="Huber W.D."/>
            <person name="Lion T."/>
            <person name="Holter W."/>
            <person name="Bilic I."/>
            <person name="Boztug K."/>
        </authorList>
    </citation>
    <scope>VARIANT GIDID1 PRO-346</scope>
</reference>
<reference key="22">
    <citation type="journal article" date="2015" name="Clin. Genet.">
        <title>Compound heterozygous mutations in TTC7A cause familial multiple intestinal atresias and severe combined immunodeficiency.</title>
        <authorList>
            <person name="Yang W."/>
            <person name="Lee P.P."/>
            <person name="Thong M.K."/>
            <person name="Ramanujam T.M."/>
            <person name="Shanmugam A."/>
            <person name="Koh M.T."/>
            <person name="Chan K.W."/>
            <person name="Ying D."/>
            <person name="Wang Y."/>
            <person name="Shen J.J."/>
            <person name="Yang J."/>
            <person name="Lau Y.L."/>
        </authorList>
    </citation>
    <scope>VARIANT GIDID1 GLU-857 DEL</scope>
</reference>
<protein>
    <recommendedName>
        <fullName evidence="17">Tetratricopeptide repeat protein 7A</fullName>
        <shortName evidence="17">TPR repeat protein 7A</shortName>
    </recommendedName>
</protein>
<proteinExistence type="evidence at protein level"/>
<comment type="function">
    <text evidence="1 5 9">Component of a complex required to localize phosphatidylinositol 4-kinase (PI4K) to the plasma membrane (PubMed:23229899, PubMed:24417819). The complex acts as a regulator of phosphatidylinositol 4-phosphate (PtdIns(4)P) synthesis (Probable). In the complex, plays a central role in bridging PI4KA to EFR3B and HYCC1, via direct interactions (By similarity).</text>
</comment>
<comment type="subunit">
    <text evidence="1 9 14">Component of a phosphatidylinositol 4-kinase (PI4K) complex, composed of PI4KA, EFR3 (EFR3A or EFR3B), TTC7 (TTC7A or TTC7B) and HYCC (HYCC1 or HYCC2) (PubMed:24417819). Interacts with PI4KA (PubMed:34415310). Interaction with PI4KA is direct (By similarity). Interacts with EFR3 (EFR3A or EFR3B), interaction is direct (By similarity). Interacts with HYCC (HYCC1 or HYCC2), interaction is direct (By similarity). Association with the PI4K complex is strongly reduced by TMEM150A (By similarity).</text>
</comment>
<comment type="interaction">
    <interactant intactId="EBI-2844096">
        <id>Q9ULT0</id>
    </interactant>
    <interactant intactId="EBI-358329">
        <id>O95071</id>
        <label>UBR5</label>
    </interactant>
    <organismsDiffer>false</organismsDiffer>
    <experiments>5</experiments>
</comment>
<comment type="subcellular location">
    <subcellularLocation>
        <location evidence="12">Cytoplasm</location>
    </subcellularLocation>
    <subcellularLocation>
        <location evidence="1">Cell membrane</location>
    </subcellularLocation>
    <text evidence="1">Localizes to the cytosol and is recruited to the plasma membrane following interaction with EFR3 (EFR3A or EFR3B).</text>
</comment>
<comment type="alternative products">
    <event type="alternative splicing"/>
    <isoform>
        <id>Q9ULT0-1</id>
        <name>1</name>
        <sequence type="displayed"/>
    </isoform>
    <isoform>
        <id>Q9ULT0-3</id>
        <name>2</name>
        <sequence type="described" ref="VSP_039347 VSP_039348"/>
    </isoform>
    <isoform>
        <id>Q9ULT0-4</id>
        <name>3</name>
        <sequence type="described" ref="VSP_057271"/>
    </isoform>
</comment>
<comment type="tissue specificity">
    <text evidence="12">Expressed in epithelial cells of the intestine, thymus, and pancreas (at protein level).</text>
</comment>
<comment type="disease" evidence="6 7 8 9 10 11 12 13">
    <disease id="DI-03733">
        <name>Gastrointestinal defects and immunodeficiency syndrome 1</name>
        <acronym>GIDID1</acronym>
        <description>An autosomal recessive congenital disorder in which obstructions occur at various levels throughout the small and large intestines, ultimately leading to organ failure. Surgical interventions are palliative but do not provide long-term survival. Some patients exhibit inflammatory bowel disease (IBD), with or without intestinal atresia, and in some cases, the intestinal features are associated with either mild or severe combined immunodeficiency.</description>
        <dbReference type="MIM" id="243150"/>
    </disease>
    <text evidence="6 12">The disease is caused by variants affecting the gene represented in this entry. Phenotypic variations have been observed: the mildest case show intestinal aberrations consisting of bloody diarrhea, apoptotic enterocolitis, and acute graft-versus-host disease- (GVHD)-like symptoms, but no atresias (PubMed:25546680). Other patients show multiple intestinal atresias, some being associated with immunodeficiency syndrome, while other do not show immunodeficiency defects (PubMed:23423984).</text>
</comment>
<comment type="miscellaneous">
    <molecule>Isoform 2</molecule>
    <text evidence="17">May be produced at very low levels due to a premature stop codon in the mRNA, leading to nonsense-mediated mRNA decay.</text>
</comment>
<comment type="sequence caution" evidence="17">
    <conflict type="erroneous translation">
        <sequence resource="EMBL-CDS" id="BAA86454"/>
    </conflict>
    <text>Wrong choice of CDS.</text>
</comment>
<accession>Q9ULT0</accession>
<accession>Q2T9J9</accession>
<accession>Q6PIX4</accession>
<accession>Q8ND67</accession>
<accession>Q9BUS3</accession>
<keyword id="KW-0025">Alternative splicing</keyword>
<keyword id="KW-1003">Cell membrane</keyword>
<keyword id="KW-0963">Cytoplasm</keyword>
<keyword id="KW-0225">Disease variant</keyword>
<keyword id="KW-0472">Membrane</keyword>
<keyword id="KW-0597">Phosphoprotein</keyword>
<keyword id="KW-1267">Proteomics identification</keyword>
<keyword id="KW-1185">Reference proteome</keyword>
<keyword id="KW-0677">Repeat</keyword>
<keyword id="KW-0802">TPR repeat</keyword>
<gene>
    <name evidence="18" type="primary">TTC7A</name>
    <name evidence="15" type="synonym">KIAA1140</name>
    <name type="synonym">TTC7</name>
</gene>
<feature type="chain" id="PRO_0000106385" description="Tetratricopeptide repeat protein 7A">
    <location>
        <begin position="1"/>
        <end position="858"/>
    </location>
</feature>
<feature type="repeat" description="TPR 1" evidence="3">
    <location>
        <begin position="121"/>
        <end position="157"/>
    </location>
</feature>
<feature type="repeat" description="TPR 2" evidence="3">
    <location>
        <begin position="177"/>
        <end position="210"/>
    </location>
</feature>
<feature type="repeat" description="TPR 3" evidence="3">
    <location>
        <begin position="414"/>
        <end position="447"/>
    </location>
</feature>
<feature type="repeat" description="TPR 4" evidence="3">
    <location>
        <begin position="497"/>
        <end position="531"/>
    </location>
</feature>
<feature type="repeat" description="TPR 5" evidence="3">
    <location>
        <begin position="533"/>
        <end position="565"/>
    </location>
</feature>
<feature type="repeat" description="TPR 6" evidence="3">
    <location>
        <begin position="566"/>
        <end position="599"/>
    </location>
</feature>
<feature type="repeat" description="TPR 7" evidence="3">
    <location>
        <begin position="745"/>
        <end position="778"/>
    </location>
</feature>
<feature type="repeat" description="TPR 8" evidence="3">
    <location>
        <begin position="780"/>
        <end position="812"/>
    </location>
</feature>
<feature type="repeat" description="TPR 9" evidence="3">
    <location>
        <begin position="813"/>
        <end position="846"/>
    </location>
</feature>
<feature type="modified residue" description="Phosphoserine" evidence="19 20 21 22">
    <location>
        <position position="51"/>
    </location>
</feature>
<feature type="modified residue" description="Phosphoserine" evidence="19 22">
    <location>
        <position position="182"/>
    </location>
</feature>
<feature type="modified residue" description="Phosphoserine" evidence="21 22 23">
    <location>
        <position position="647"/>
    </location>
</feature>
<feature type="modified residue" description="Phosphoserine" evidence="2">
    <location>
        <position position="678"/>
    </location>
</feature>
<feature type="modified residue" description="Phosphoserine" evidence="2">
    <location>
        <position position="679"/>
    </location>
</feature>
<feature type="modified residue" description="Phosphoserine" evidence="22">
    <location>
        <position position="690"/>
    </location>
</feature>
<feature type="modified residue" description="Phosphothreonine" evidence="22 23">
    <location>
        <position position="693"/>
    </location>
</feature>
<feature type="splice variant" id="VSP_039347" description="In isoform 2." evidence="15">
    <original>PQYMCEAMLILGKLHYVEGSYRDAISMYAR</original>
    <variation>GLAVLLRLVSNSWAQAILLLQPPEALGLQE</variation>
    <location>
        <begin position="117"/>
        <end position="146"/>
    </location>
</feature>
<feature type="splice variant" id="VSP_039348" description="In isoform 2." evidence="15">
    <location>
        <begin position="147"/>
        <end position="858"/>
    </location>
</feature>
<feature type="splice variant" id="VSP_057271" description="In isoform 3." evidence="16">
    <original>L</original>
    <variation>LGDFRSPEGFQTPQRNICNSEIYRG</variation>
    <location>
        <position position="639"/>
    </location>
</feature>
<feature type="sequence variant" id="VAR_075126" description="In GIDID1; reduced interaction with PI4KA; dbSNP:rs147914967." evidence="9">
    <original>E</original>
    <variation>K</variation>
    <location>
        <position position="71"/>
    </location>
</feature>
<feature type="sequence variant" id="VAR_075127" description="In GIDID1." evidence="8">
    <location>
        <position position="277"/>
    </location>
</feature>
<feature type="sequence variant" id="VAR_075128" description="In GIDID1." evidence="8">
    <location>
        <position position="336"/>
    </location>
</feature>
<feature type="sequence variant" id="VAR_075129" description="In GIDID1." evidence="13">
    <original>L</original>
    <variation>P</variation>
    <location>
        <position position="346"/>
    </location>
</feature>
<feature type="sequence variant" id="VAR_075130" description="In GIDID1; dbSNP:rs2104453742." evidence="7">
    <original>L</original>
    <variation>P</variation>
    <location>
        <position position="399"/>
    </location>
</feature>
<feature type="sequence variant" id="VAR_075131" description="In GIDID1." evidence="9">
    <location>
        <position position="526"/>
    </location>
</feature>
<feature type="sequence variant" id="VAR_016602" description="In dbSNP:rs2304290." evidence="4">
    <original>V</original>
    <variation>L</variation>
    <location>
        <position position="538"/>
    </location>
</feature>
<feature type="sequence variant" id="VAR_075132" description="In GIDID1; dbSNP:rs776906926." evidence="8">
    <original>S</original>
    <variation>L</variation>
    <location>
        <position position="539"/>
    </location>
</feature>
<feature type="sequence variant" id="VAR_052624" description="In dbSNP:rs6755258.">
    <original>V</original>
    <variation>I</variation>
    <location>
        <position position="545"/>
    </location>
</feature>
<feature type="sequence variant" id="VAR_075133" description="In GIDID1." evidence="10">
    <original>A</original>
    <variation>D</variation>
    <location>
        <position position="551"/>
    </location>
</feature>
<feature type="sequence variant" id="VAR_075134" description="In GIDID1; dbSNP:rs139010200." evidence="7">
    <original>K</original>
    <variation>R</variation>
    <location>
        <position position="606"/>
    </location>
</feature>
<feature type="sequence variant" id="VAR_075135" description="In GIDID1; dbSNP:rs149602485." evidence="7">
    <original>S</original>
    <variation>P</variation>
    <location>
        <position position="672"/>
    </location>
</feature>
<feature type="sequence variant" id="VAR_075136" description="In GIDID1." evidence="7">
    <location>
        <position position="678"/>
    </location>
</feature>
<feature type="sequence variant" id="VAR_075137" description="In GIDID1." evidence="7">
    <location>
        <position position="712"/>
    </location>
</feature>
<feature type="sequence variant" id="VAR_069636" description="In GIDID1; dbSNP:rs587776972." evidence="6 7">
    <original>L</original>
    <variation>P</variation>
    <location>
        <position position="823"/>
    </location>
</feature>
<feature type="sequence variant" id="VAR_075138" description="In GIDID1." evidence="10">
    <location>
        <position position="828"/>
    </location>
</feature>
<feature type="sequence variant" id="VAR_075139" description="In GIDID1; reduced interaction with PI4KA; dbSNP:rs876657393." evidence="9">
    <original>A</original>
    <variation>T</variation>
    <location>
        <position position="832"/>
    </location>
</feature>
<feature type="sequence variant" id="VAR_075140" description="In GIDID1." evidence="8">
    <location>
        <position position="832"/>
    </location>
</feature>
<feature type="sequence variant" id="VAR_075141" description="In GIDID1." evidence="11">
    <location>
        <position position="857"/>
    </location>
</feature>
<feature type="sequence conflict" description="In Ref. 2; BAA86454." evidence="17" ref="2">
    <original>M</original>
    <variation>I</variation>
    <location>
        <position position="603"/>
    </location>
</feature>
<name>TTC7A_HUMAN</name>